<name>Y1394_ARCFU</name>
<sequence>MNVEFVRDEGIAIELNGRSYYVRASHLGVKDGKILLCLDFAAPTALEPVKTFLKSYSKIRGARYAVLISGEERWIYDNYLGREVDEVEERVVEVRAEEKDYRLAAAFYALIHCECGVGDEGNCLCGLPPEW</sequence>
<organism>
    <name type="scientific">Archaeoglobus fulgidus (strain ATCC 49558 / DSM 4304 / JCM 9628 / NBRC 100126 / VC-16)</name>
    <dbReference type="NCBI Taxonomy" id="224325"/>
    <lineage>
        <taxon>Archaea</taxon>
        <taxon>Methanobacteriati</taxon>
        <taxon>Methanobacteriota</taxon>
        <taxon>Archaeoglobi</taxon>
        <taxon>Archaeoglobales</taxon>
        <taxon>Archaeoglobaceae</taxon>
        <taxon>Archaeoglobus</taxon>
    </lineage>
</organism>
<keyword id="KW-1185">Reference proteome</keyword>
<dbReference type="EMBL" id="AE000782">
    <property type="protein sequence ID" value="AAB89859.1"/>
    <property type="molecule type" value="Genomic_DNA"/>
</dbReference>
<dbReference type="PIR" id="A69424">
    <property type="entry name" value="A69424"/>
</dbReference>
<dbReference type="RefSeq" id="WP_010878891.1">
    <property type="nucleotide sequence ID" value="NC_000917.1"/>
</dbReference>
<dbReference type="STRING" id="224325.AF_1394"/>
<dbReference type="PaxDb" id="224325-AF_1394"/>
<dbReference type="EnsemblBacteria" id="AAB89859">
    <property type="protein sequence ID" value="AAB89859"/>
    <property type="gene ID" value="AF_1394"/>
</dbReference>
<dbReference type="GeneID" id="1484618"/>
<dbReference type="KEGG" id="afu:AF_1394"/>
<dbReference type="HOGENOM" id="CLU_1922654_0_0_2"/>
<dbReference type="Proteomes" id="UP000002199">
    <property type="component" value="Chromosome"/>
</dbReference>
<proteinExistence type="predicted"/>
<accession>O28877</accession>
<feature type="chain" id="PRO_0000127996" description="Uncharacterized protein AF_1394">
    <location>
        <begin position="1"/>
        <end position="131"/>
    </location>
</feature>
<reference key="1">
    <citation type="journal article" date="1997" name="Nature">
        <title>The complete genome sequence of the hyperthermophilic, sulphate-reducing archaeon Archaeoglobus fulgidus.</title>
        <authorList>
            <person name="Klenk H.-P."/>
            <person name="Clayton R.A."/>
            <person name="Tomb J.-F."/>
            <person name="White O."/>
            <person name="Nelson K.E."/>
            <person name="Ketchum K.A."/>
            <person name="Dodson R.J."/>
            <person name="Gwinn M.L."/>
            <person name="Hickey E.K."/>
            <person name="Peterson J.D."/>
            <person name="Richardson D.L."/>
            <person name="Kerlavage A.R."/>
            <person name="Graham D.E."/>
            <person name="Kyrpides N.C."/>
            <person name="Fleischmann R.D."/>
            <person name="Quackenbush J."/>
            <person name="Lee N.H."/>
            <person name="Sutton G.G."/>
            <person name="Gill S.R."/>
            <person name="Kirkness E.F."/>
            <person name="Dougherty B.A."/>
            <person name="McKenney K."/>
            <person name="Adams M.D."/>
            <person name="Loftus B.J."/>
            <person name="Peterson S.N."/>
            <person name="Reich C.I."/>
            <person name="McNeil L.K."/>
            <person name="Badger J.H."/>
            <person name="Glodek A."/>
            <person name="Zhou L."/>
            <person name="Overbeek R."/>
            <person name="Gocayne J.D."/>
            <person name="Weidman J.F."/>
            <person name="McDonald L.A."/>
            <person name="Utterback T.R."/>
            <person name="Cotton M.D."/>
            <person name="Spriggs T."/>
            <person name="Artiach P."/>
            <person name="Kaine B.P."/>
            <person name="Sykes S.M."/>
            <person name="Sadow P.W."/>
            <person name="D'Andrea K.P."/>
            <person name="Bowman C."/>
            <person name="Fujii C."/>
            <person name="Garland S.A."/>
            <person name="Mason T.M."/>
            <person name="Olsen G.J."/>
            <person name="Fraser C.M."/>
            <person name="Smith H.O."/>
            <person name="Woese C.R."/>
            <person name="Venter J.C."/>
        </authorList>
    </citation>
    <scope>NUCLEOTIDE SEQUENCE [LARGE SCALE GENOMIC DNA]</scope>
    <source>
        <strain>ATCC 49558 / DSM 4304 / JCM 9628 / NBRC 100126 / VC-16</strain>
    </source>
</reference>
<protein>
    <recommendedName>
        <fullName>Uncharacterized protein AF_1394</fullName>
    </recommendedName>
</protein>
<gene>
    <name type="ordered locus">AF_1394</name>
</gene>